<reference key="1">
    <citation type="journal article" date="2006" name="J. Bacteriol.">
        <title>Pathogenomic sequence analysis of Bacillus cereus and Bacillus thuringiensis isolates closely related to Bacillus anthracis.</title>
        <authorList>
            <person name="Han C.S."/>
            <person name="Xie G."/>
            <person name="Challacombe J.F."/>
            <person name="Altherr M.R."/>
            <person name="Bhotika S.S."/>
            <person name="Bruce D."/>
            <person name="Campbell C.S."/>
            <person name="Campbell M.L."/>
            <person name="Chen J."/>
            <person name="Chertkov O."/>
            <person name="Cleland C."/>
            <person name="Dimitrijevic M."/>
            <person name="Doggett N.A."/>
            <person name="Fawcett J.J."/>
            <person name="Glavina T."/>
            <person name="Goodwin L.A."/>
            <person name="Hill K.K."/>
            <person name="Hitchcock P."/>
            <person name="Jackson P.J."/>
            <person name="Keim P."/>
            <person name="Kewalramani A.R."/>
            <person name="Longmire J."/>
            <person name="Lucas S."/>
            <person name="Malfatti S."/>
            <person name="McMurry K."/>
            <person name="Meincke L.J."/>
            <person name="Misra M."/>
            <person name="Moseman B.L."/>
            <person name="Mundt M."/>
            <person name="Munk A.C."/>
            <person name="Okinaka R.T."/>
            <person name="Parson-Quintana B."/>
            <person name="Reilly L.P."/>
            <person name="Richardson P."/>
            <person name="Robinson D.L."/>
            <person name="Rubin E."/>
            <person name="Saunders E."/>
            <person name="Tapia R."/>
            <person name="Tesmer J.G."/>
            <person name="Thayer N."/>
            <person name="Thompson L.S."/>
            <person name="Tice H."/>
            <person name="Ticknor L.O."/>
            <person name="Wills P.L."/>
            <person name="Brettin T.S."/>
            <person name="Gilna P."/>
        </authorList>
    </citation>
    <scope>NUCLEOTIDE SEQUENCE [LARGE SCALE GENOMIC DNA]</scope>
    <source>
        <strain>ZK / E33L</strain>
    </source>
</reference>
<name>SYG_BACCZ</name>
<accession>Q632E8</accession>
<dbReference type="EC" id="6.1.1.14" evidence="1"/>
<dbReference type="EMBL" id="CP000001">
    <property type="protein sequence ID" value="AAU15629.1"/>
    <property type="molecule type" value="Genomic_DNA"/>
</dbReference>
<dbReference type="RefSeq" id="WP_000287154.1">
    <property type="nucleotide sequence ID" value="NZ_CP009968.1"/>
</dbReference>
<dbReference type="SMR" id="Q632E8"/>
<dbReference type="KEGG" id="bcz:BCE33L4646"/>
<dbReference type="PATRIC" id="fig|288681.22.peg.713"/>
<dbReference type="Proteomes" id="UP000002612">
    <property type="component" value="Chromosome"/>
</dbReference>
<dbReference type="GO" id="GO:0005737">
    <property type="term" value="C:cytoplasm"/>
    <property type="evidence" value="ECO:0007669"/>
    <property type="project" value="UniProtKB-SubCell"/>
</dbReference>
<dbReference type="GO" id="GO:0005524">
    <property type="term" value="F:ATP binding"/>
    <property type="evidence" value="ECO:0007669"/>
    <property type="project" value="UniProtKB-UniRule"/>
</dbReference>
<dbReference type="GO" id="GO:0140096">
    <property type="term" value="F:catalytic activity, acting on a protein"/>
    <property type="evidence" value="ECO:0007669"/>
    <property type="project" value="UniProtKB-ARBA"/>
</dbReference>
<dbReference type="GO" id="GO:0004820">
    <property type="term" value="F:glycine-tRNA ligase activity"/>
    <property type="evidence" value="ECO:0000250"/>
    <property type="project" value="UniProtKB"/>
</dbReference>
<dbReference type="GO" id="GO:0046983">
    <property type="term" value="F:protein dimerization activity"/>
    <property type="evidence" value="ECO:0000250"/>
    <property type="project" value="UniProtKB"/>
</dbReference>
<dbReference type="GO" id="GO:0016740">
    <property type="term" value="F:transferase activity"/>
    <property type="evidence" value="ECO:0007669"/>
    <property type="project" value="UniProtKB-ARBA"/>
</dbReference>
<dbReference type="GO" id="GO:0006426">
    <property type="term" value="P:glycyl-tRNA aminoacylation"/>
    <property type="evidence" value="ECO:0007669"/>
    <property type="project" value="UniProtKB-UniRule"/>
</dbReference>
<dbReference type="CDD" id="cd00774">
    <property type="entry name" value="GlyRS-like_core"/>
    <property type="match status" value="1"/>
</dbReference>
<dbReference type="CDD" id="cd00858">
    <property type="entry name" value="GlyRS_anticodon"/>
    <property type="match status" value="1"/>
</dbReference>
<dbReference type="FunFam" id="3.30.40.230:FF:000004">
    <property type="entry name" value="Glycine--tRNA ligase"/>
    <property type="match status" value="1"/>
</dbReference>
<dbReference type="FunFam" id="3.40.50.800:FF:000002">
    <property type="entry name" value="Glycine--tRNA ligase"/>
    <property type="match status" value="1"/>
</dbReference>
<dbReference type="Gene3D" id="3.30.40.230">
    <property type="match status" value="1"/>
</dbReference>
<dbReference type="Gene3D" id="3.40.50.800">
    <property type="entry name" value="Anticodon-binding domain"/>
    <property type="match status" value="1"/>
</dbReference>
<dbReference type="Gene3D" id="3.30.930.10">
    <property type="entry name" value="Bira Bifunctional Protein, Domain 2"/>
    <property type="match status" value="1"/>
</dbReference>
<dbReference type="HAMAP" id="MF_00253_B">
    <property type="entry name" value="Gly_tRNA_synth_B"/>
    <property type="match status" value="1"/>
</dbReference>
<dbReference type="InterPro" id="IPR002314">
    <property type="entry name" value="aa-tRNA-synt_IIb"/>
</dbReference>
<dbReference type="InterPro" id="IPR006195">
    <property type="entry name" value="aa-tRNA-synth_II"/>
</dbReference>
<dbReference type="InterPro" id="IPR045864">
    <property type="entry name" value="aa-tRNA-synth_II/BPL/LPL"/>
</dbReference>
<dbReference type="InterPro" id="IPR004154">
    <property type="entry name" value="Anticodon-bd"/>
</dbReference>
<dbReference type="InterPro" id="IPR036621">
    <property type="entry name" value="Anticodon-bd_dom_sf"/>
</dbReference>
<dbReference type="InterPro" id="IPR027031">
    <property type="entry name" value="Gly-tRNA_synthase/POLG2"/>
</dbReference>
<dbReference type="InterPro" id="IPR022961">
    <property type="entry name" value="Gly_tRNA_ligase_bac"/>
</dbReference>
<dbReference type="InterPro" id="IPR033731">
    <property type="entry name" value="GlyRS-like_core"/>
</dbReference>
<dbReference type="InterPro" id="IPR002315">
    <property type="entry name" value="tRNA-synt_gly"/>
</dbReference>
<dbReference type="NCBIfam" id="TIGR00389">
    <property type="entry name" value="glyS_dimeric"/>
    <property type="match status" value="1"/>
</dbReference>
<dbReference type="NCBIfam" id="NF003211">
    <property type="entry name" value="PRK04173.1"/>
    <property type="match status" value="1"/>
</dbReference>
<dbReference type="PANTHER" id="PTHR10745:SF8">
    <property type="entry name" value="DNA POLYMERASE SUBUNIT GAMMA-2, MITOCHONDRIAL"/>
    <property type="match status" value="1"/>
</dbReference>
<dbReference type="PANTHER" id="PTHR10745">
    <property type="entry name" value="GLYCYL-TRNA SYNTHETASE/DNA POLYMERASE SUBUNIT GAMMA-2"/>
    <property type="match status" value="1"/>
</dbReference>
<dbReference type="Pfam" id="PF03129">
    <property type="entry name" value="HGTP_anticodon"/>
    <property type="match status" value="1"/>
</dbReference>
<dbReference type="Pfam" id="PF00587">
    <property type="entry name" value="tRNA-synt_2b"/>
    <property type="match status" value="1"/>
</dbReference>
<dbReference type="PRINTS" id="PR01043">
    <property type="entry name" value="TRNASYNTHGLY"/>
</dbReference>
<dbReference type="SUPFAM" id="SSF52954">
    <property type="entry name" value="Class II aaRS ABD-related"/>
    <property type="match status" value="1"/>
</dbReference>
<dbReference type="SUPFAM" id="SSF55681">
    <property type="entry name" value="Class II aaRS and biotin synthetases"/>
    <property type="match status" value="1"/>
</dbReference>
<dbReference type="PROSITE" id="PS50862">
    <property type="entry name" value="AA_TRNA_LIGASE_II"/>
    <property type="match status" value="1"/>
</dbReference>
<comment type="function">
    <text evidence="1">Catalyzes the attachment of glycine to tRNA(Gly).</text>
</comment>
<comment type="catalytic activity">
    <reaction evidence="1">
        <text>tRNA(Gly) + glycine + ATP = glycyl-tRNA(Gly) + AMP + diphosphate</text>
        <dbReference type="Rhea" id="RHEA:16013"/>
        <dbReference type="Rhea" id="RHEA-COMP:9664"/>
        <dbReference type="Rhea" id="RHEA-COMP:9683"/>
        <dbReference type="ChEBI" id="CHEBI:30616"/>
        <dbReference type="ChEBI" id="CHEBI:33019"/>
        <dbReference type="ChEBI" id="CHEBI:57305"/>
        <dbReference type="ChEBI" id="CHEBI:78442"/>
        <dbReference type="ChEBI" id="CHEBI:78522"/>
        <dbReference type="ChEBI" id="CHEBI:456215"/>
        <dbReference type="EC" id="6.1.1.14"/>
    </reaction>
</comment>
<comment type="subunit">
    <text evidence="1">Homodimer.</text>
</comment>
<comment type="subcellular location">
    <subcellularLocation>
        <location evidence="1">Cytoplasm</location>
    </subcellularLocation>
</comment>
<comment type="similarity">
    <text evidence="1">Belongs to the class-II aminoacyl-tRNA synthetase family.</text>
</comment>
<protein>
    <recommendedName>
        <fullName evidence="1">Glycine--tRNA ligase</fullName>
        <ecNumber evidence="1">6.1.1.14</ecNumber>
    </recommendedName>
    <alternativeName>
        <fullName evidence="1">Glycyl-tRNA synthetase</fullName>
        <shortName evidence="1">GlyRS</shortName>
    </alternativeName>
</protein>
<organism>
    <name type="scientific">Bacillus cereus (strain ZK / E33L)</name>
    <dbReference type="NCBI Taxonomy" id="288681"/>
    <lineage>
        <taxon>Bacteria</taxon>
        <taxon>Bacillati</taxon>
        <taxon>Bacillota</taxon>
        <taxon>Bacilli</taxon>
        <taxon>Bacillales</taxon>
        <taxon>Bacillaceae</taxon>
        <taxon>Bacillus</taxon>
        <taxon>Bacillus cereus group</taxon>
    </lineage>
</organism>
<sequence>MYSMEQVVNLAKHRGFVFPGSEIYGGLANTWDYGPLGIELKNNVKKAWWKKFIQESPYNVGLDAAILMNPKTWIASGHVGNFNDPMIDCKKCKARHRADKLIEDALDAKGIEMVVDGLTFDQMADLMKEHEVKCPDCGSEEFTEIRQFNLMFKTFQGVTESSTNEIFLRPETAQGIFVNFKNVQRSMRKKLPFGIGQIGKSFRNEITPGNFTFRTREFEQMELEFFCKPGEDLEWFAFWRETCKNWLLSLGMTEESMRLRDHGEEELSHYSNATTDIEFKFPFGWGELWGVASRTDFDLKRHMEHSNEDFNYIDPQTNERYVPYCIEPSLGADRVTLAFLCDAYEEEQLENDSRTVLRFHPALAPYKAAILPLSKKLSEGATEVFAELAKDFMVDFDETGSIGKRYRRQDEIGTPFCITYDFDSVEDKAVTVRDRDTMEQVRMPISELKGFLEKKIQF</sequence>
<proteinExistence type="inferred from homology"/>
<keyword id="KW-0030">Aminoacyl-tRNA synthetase</keyword>
<keyword id="KW-0067">ATP-binding</keyword>
<keyword id="KW-0963">Cytoplasm</keyword>
<keyword id="KW-0436">Ligase</keyword>
<keyword id="KW-0547">Nucleotide-binding</keyword>
<keyword id="KW-0648">Protein biosynthesis</keyword>
<evidence type="ECO:0000255" key="1">
    <source>
        <dbReference type="HAMAP-Rule" id="MF_00253"/>
    </source>
</evidence>
<gene>
    <name evidence="1" type="primary">glyQS</name>
    <name type="synonym">glyS</name>
    <name type="ordered locus">BCE33L4646</name>
</gene>
<feature type="chain" id="PRO_0000072945" description="Glycine--tRNA ligase">
    <location>
        <begin position="1"/>
        <end position="458"/>
    </location>
</feature>
<feature type="binding site" evidence="1">
    <location>
        <position position="97"/>
    </location>
    <ligand>
        <name>substrate</name>
    </ligand>
</feature>
<feature type="binding site" evidence="1">
    <location>
        <position position="171"/>
    </location>
    <ligand>
        <name>substrate</name>
    </ligand>
</feature>
<feature type="binding site" evidence="1">
    <location>
        <begin position="203"/>
        <end position="205"/>
    </location>
    <ligand>
        <name>ATP</name>
        <dbReference type="ChEBI" id="CHEBI:30616"/>
    </ligand>
</feature>
<feature type="binding site" evidence="1">
    <location>
        <begin position="213"/>
        <end position="218"/>
    </location>
    <ligand>
        <name>ATP</name>
        <dbReference type="ChEBI" id="CHEBI:30616"/>
    </ligand>
</feature>
<feature type="binding site" evidence="1">
    <location>
        <begin position="218"/>
        <end position="222"/>
    </location>
    <ligand>
        <name>substrate</name>
    </ligand>
</feature>
<feature type="binding site" evidence="1">
    <location>
        <begin position="287"/>
        <end position="288"/>
    </location>
    <ligand>
        <name>ATP</name>
        <dbReference type="ChEBI" id="CHEBI:30616"/>
    </ligand>
</feature>
<feature type="binding site" evidence="1">
    <location>
        <begin position="327"/>
        <end position="331"/>
    </location>
    <ligand>
        <name>substrate</name>
    </ligand>
</feature>
<feature type="binding site" evidence="1">
    <location>
        <begin position="331"/>
        <end position="334"/>
    </location>
    <ligand>
        <name>ATP</name>
        <dbReference type="ChEBI" id="CHEBI:30616"/>
    </ligand>
</feature>